<sequence length="475" mass="52797">MSPQTETKASVGFKAGVKDYKLTYYTPEYETKDTDILAAFRVTPQPGVPPEEAGAAVAAESSTGTWTTVWTDGLTSLDRYKGRCYHIEPVAGEENQYICYVAYPLDLFEEGSVTNMFTSIVGNVFGFKALRALRLEDLRIPTAYVKTFQGPPHGIQVERDKLNKYGRPLLGCTIKPKLGLSAKNYGRAVYECLRGGLDFTKDDENVNSQPFMRWRDRFLFCAEAIYKSQAETGEIKGHYLNATAGTCEEMMKRAIFARELGVPIVMHDYLTGGFTANTSLAHYCRDNGLLLHIHRAMHAVIDRQKNHGIHFRVLAKALRMSGGDHIHSGTVVGKLEGERDITLGFVDLLRDDFIEKDRSRGIYFTQDWVSLPGVLPVASGGIHVWHMPALTEIFGDDSVLQFGGGTLGHPWGNAPGAVANRVALEACVQARNEGRDLAREGNEIIREACKWSPELAAACEVWKEIKFEFQAMDTL</sequence>
<name>RBL_OENAR</name>
<protein>
    <recommendedName>
        <fullName evidence="1">Ribulose bisphosphate carboxylase large chain</fullName>
        <shortName evidence="1">RuBisCO large subunit</shortName>
        <ecNumber evidence="1">4.1.1.39</ecNumber>
    </recommendedName>
</protein>
<evidence type="ECO:0000255" key="1">
    <source>
        <dbReference type="HAMAP-Rule" id="MF_01338"/>
    </source>
</evidence>
<keyword id="KW-0007">Acetylation</keyword>
<keyword id="KW-0113">Calvin cycle</keyword>
<keyword id="KW-0120">Carbon dioxide fixation</keyword>
<keyword id="KW-0150">Chloroplast</keyword>
<keyword id="KW-1015">Disulfide bond</keyword>
<keyword id="KW-0456">Lyase</keyword>
<keyword id="KW-0460">Magnesium</keyword>
<keyword id="KW-0479">Metal-binding</keyword>
<keyword id="KW-0488">Methylation</keyword>
<keyword id="KW-0503">Monooxygenase</keyword>
<keyword id="KW-0560">Oxidoreductase</keyword>
<keyword id="KW-0601">Photorespiration</keyword>
<keyword id="KW-0602">Photosynthesis</keyword>
<keyword id="KW-0934">Plastid</keyword>
<dbReference type="EC" id="4.1.1.39" evidence="1"/>
<dbReference type="EMBL" id="EU262887">
    <property type="protein sequence ID" value="ABW98687.1"/>
    <property type="molecule type" value="Genomic_DNA"/>
</dbReference>
<dbReference type="RefSeq" id="YP_001687120.1">
    <property type="nucleotide sequence ID" value="NC_010358.2"/>
</dbReference>
<dbReference type="SMR" id="B0Z4K9"/>
<dbReference type="GeneID" id="5951906"/>
<dbReference type="GO" id="GO:0009507">
    <property type="term" value="C:chloroplast"/>
    <property type="evidence" value="ECO:0007669"/>
    <property type="project" value="UniProtKB-SubCell"/>
</dbReference>
<dbReference type="GO" id="GO:0000287">
    <property type="term" value="F:magnesium ion binding"/>
    <property type="evidence" value="ECO:0007669"/>
    <property type="project" value="UniProtKB-UniRule"/>
</dbReference>
<dbReference type="GO" id="GO:0004497">
    <property type="term" value="F:monooxygenase activity"/>
    <property type="evidence" value="ECO:0007669"/>
    <property type="project" value="UniProtKB-KW"/>
</dbReference>
<dbReference type="GO" id="GO:0016984">
    <property type="term" value="F:ribulose-bisphosphate carboxylase activity"/>
    <property type="evidence" value="ECO:0007669"/>
    <property type="project" value="UniProtKB-UniRule"/>
</dbReference>
<dbReference type="GO" id="GO:0009853">
    <property type="term" value="P:photorespiration"/>
    <property type="evidence" value="ECO:0007669"/>
    <property type="project" value="UniProtKB-KW"/>
</dbReference>
<dbReference type="GO" id="GO:0019253">
    <property type="term" value="P:reductive pentose-phosphate cycle"/>
    <property type="evidence" value="ECO:0007669"/>
    <property type="project" value="UniProtKB-UniRule"/>
</dbReference>
<dbReference type="CDD" id="cd08212">
    <property type="entry name" value="RuBisCO_large_I"/>
    <property type="match status" value="1"/>
</dbReference>
<dbReference type="FunFam" id="3.20.20.110:FF:000001">
    <property type="entry name" value="Ribulose bisphosphate carboxylase large chain"/>
    <property type="match status" value="1"/>
</dbReference>
<dbReference type="FunFam" id="3.30.70.150:FF:000001">
    <property type="entry name" value="Ribulose bisphosphate carboxylase large chain"/>
    <property type="match status" value="1"/>
</dbReference>
<dbReference type="Gene3D" id="3.20.20.110">
    <property type="entry name" value="Ribulose bisphosphate carboxylase, large subunit, C-terminal domain"/>
    <property type="match status" value="1"/>
</dbReference>
<dbReference type="Gene3D" id="3.30.70.150">
    <property type="entry name" value="RuBisCO large subunit, N-terminal domain"/>
    <property type="match status" value="1"/>
</dbReference>
<dbReference type="HAMAP" id="MF_01338">
    <property type="entry name" value="RuBisCO_L_type1"/>
    <property type="match status" value="1"/>
</dbReference>
<dbReference type="InterPro" id="IPR033966">
    <property type="entry name" value="RuBisCO"/>
</dbReference>
<dbReference type="InterPro" id="IPR020878">
    <property type="entry name" value="RuBisCo_large_chain_AS"/>
</dbReference>
<dbReference type="InterPro" id="IPR000685">
    <property type="entry name" value="RuBisCO_lsu_C"/>
</dbReference>
<dbReference type="InterPro" id="IPR036376">
    <property type="entry name" value="RuBisCO_lsu_C_sf"/>
</dbReference>
<dbReference type="InterPro" id="IPR017443">
    <property type="entry name" value="RuBisCO_lsu_fd_N"/>
</dbReference>
<dbReference type="InterPro" id="IPR036422">
    <property type="entry name" value="RuBisCO_lsu_N_sf"/>
</dbReference>
<dbReference type="InterPro" id="IPR020888">
    <property type="entry name" value="RuBisCO_lsuI"/>
</dbReference>
<dbReference type="NCBIfam" id="NF003252">
    <property type="entry name" value="PRK04208.1"/>
    <property type="match status" value="1"/>
</dbReference>
<dbReference type="PANTHER" id="PTHR42704">
    <property type="entry name" value="RIBULOSE BISPHOSPHATE CARBOXYLASE"/>
    <property type="match status" value="1"/>
</dbReference>
<dbReference type="PANTHER" id="PTHR42704:SF15">
    <property type="entry name" value="RIBULOSE BISPHOSPHATE CARBOXYLASE LARGE CHAIN"/>
    <property type="match status" value="1"/>
</dbReference>
<dbReference type="Pfam" id="PF00016">
    <property type="entry name" value="RuBisCO_large"/>
    <property type="match status" value="1"/>
</dbReference>
<dbReference type="Pfam" id="PF02788">
    <property type="entry name" value="RuBisCO_large_N"/>
    <property type="match status" value="1"/>
</dbReference>
<dbReference type="SFLD" id="SFLDG01052">
    <property type="entry name" value="RuBisCO"/>
    <property type="match status" value="1"/>
</dbReference>
<dbReference type="SFLD" id="SFLDS00014">
    <property type="entry name" value="RuBisCO"/>
    <property type="match status" value="1"/>
</dbReference>
<dbReference type="SFLD" id="SFLDG00301">
    <property type="entry name" value="RuBisCO-like_proteins"/>
    <property type="match status" value="1"/>
</dbReference>
<dbReference type="SUPFAM" id="SSF51649">
    <property type="entry name" value="RuBisCo, C-terminal domain"/>
    <property type="match status" value="1"/>
</dbReference>
<dbReference type="SUPFAM" id="SSF54966">
    <property type="entry name" value="RuBisCO, large subunit, small (N-terminal) domain"/>
    <property type="match status" value="1"/>
</dbReference>
<dbReference type="PROSITE" id="PS00157">
    <property type="entry name" value="RUBISCO_LARGE"/>
    <property type="match status" value="1"/>
</dbReference>
<feature type="propeptide" id="PRO_0000355792" evidence="1">
    <location>
        <begin position="1"/>
        <end position="2"/>
    </location>
</feature>
<feature type="chain" id="PRO_0000355793" description="Ribulose bisphosphate carboxylase large chain">
    <location>
        <begin position="3"/>
        <end position="475"/>
    </location>
</feature>
<feature type="active site" description="Proton acceptor" evidence="1">
    <location>
        <position position="175"/>
    </location>
</feature>
<feature type="active site" description="Proton acceptor" evidence="1">
    <location>
        <position position="294"/>
    </location>
</feature>
<feature type="binding site" description="in homodimeric partner" evidence="1">
    <location>
        <position position="123"/>
    </location>
    <ligand>
        <name>substrate</name>
    </ligand>
</feature>
<feature type="binding site" evidence="1">
    <location>
        <position position="173"/>
    </location>
    <ligand>
        <name>substrate</name>
    </ligand>
</feature>
<feature type="binding site" evidence="1">
    <location>
        <position position="177"/>
    </location>
    <ligand>
        <name>substrate</name>
    </ligand>
</feature>
<feature type="binding site" description="via carbamate group" evidence="1">
    <location>
        <position position="201"/>
    </location>
    <ligand>
        <name>Mg(2+)</name>
        <dbReference type="ChEBI" id="CHEBI:18420"/>
    </ligand>
</feature>
<feature type="binding site" evidence="1">
    <location>
        <position position="203"/>
    </location>
    <ligand>
        <name>Mg(2+)</name>
        <dbReference type="ChEBI" id="CHEBI:18420"/>
    </ligand>
</feature>
<feature type="binding site" evidence="1">
    <location>
        <position position="204"/>
    </location>
    <ligand>
        <name>Mg(2+)</name>
        <dbReference type="ChEBI" id="CHEBI:18420"/>
    </ligand>
</feature>
<feature type="binding site" evidence="1">
    <location>
        <position position="295"/>
    </location>
    <ligand>
        <name>substrate</name>
    </ligand>
</feature>
<feature type="binding site" evidence="1">
    <location>
        <position position="327"/>
    </location>
    <ligand>
        <name>substrate</name>
    </ligand>
</feature>
<feature type="binding site" evidence="1">
    <location>
        <position position="379"/>
    </location>
    <ligand>
        <name>substrate</name>
    </ligand>
</feature>
<feature type="site" description="Transition state stabilizer" evidence="1">
    <location>
        <position position="334"/>
    </location>
</feature>
<feature type="modified residue" description="N-acetylproline" evidence="1">
    <location>
        <position position="3"/>
    </location>
</feature>
<feature type="modified residue" description="N6,N6,N6-trimethyllysine" evidence="1">
    <location>
        <position position="14"/>
    </location>
</feature>
<feature type="modified residue" description="N6-carboxylysine" evidence="1">
    <location>
        <position position="201"/>
    </location>
</feature>
<feature type="disulfide bond" description="Interchain; in linked form" evidence="1">
    <location>
        <position position="247"/>
    </location>
</feature>
<geneLocation type="chloroplast"/>
<reference key="1">
    <citation type="journal article" date="2008" name="Nucleic Acids Res.">
        <title>The complete nucleotide sequences of the five genetically distinct plastid genomes of Oenothera, subsection Oenothera: I. Sequence evaluation and plastome evolution.</title>
        <authorList>
            <person name="Greiner S."/>
            <person name="Wang X."/>
            <person name="Rauwolf U."/>
            <person name="Silber M.V."/>
            <person name="Mayer K."/>
            <person name="Meurer J."/>
            <person name="Haberer G."/>
            <person name="Herrmann R.G."/>
        </authorList>
    </citation>
    <scope>NUCLEOTIDE SEQUENCE [LARGE SCALE GENOMIC DNA]</scope>
    <source>
        <strain>cv. Douthat 1</strain>
    </source>
</reference>
<comment type="function">
    <text evidence="1">RuBisCO catalyzes two reactions: the carboxylation of D-ribulose 1,5-bisphosphate, the primary event in carbon dioxide fixation, as well as the oxidative fragmentation of the pentose substrate in the photorespiration process. Both reactions occur simultaneously and in competition at the same active site.</text>
</comment>
<comment type="catalytic activity">
    <reaction evidence="1">
        <text>2 (2R)-3-phosphoglycerate + 2 H(+) = D-ribulose 1,5-bisphosphate + CO2 + H2O</text>
        <dbReference type="Rhea" id="RHEA:23124"/>
        <dbReference type="ChEBI" id="CHEBI:15377"/>
        <dbReference type="ChEBI" id="CHEBI:15378"/>
        <dbReference type="ChEBI" id="CHEBI:16526"/>
        <dbReference type="ChEBI" id="CHEBI:57870"/>
        <dbReference type="ChEBI" id="CHEBI:58272"/>
        <dbReference type="EC" id="4.1.1.39"/>
    </reaction>
</comment>
<comment type="catalytic activity">
    <reaction evidence="1">
        <text>D-ribulose 1,5-bisphosphate + O2 = 2-phosphoglycolate + (2R)-3-phosphoglycerate + 2 H(+)</text>
        <dbReference type="Rhea" id="RHEA:36631"/>
        <dbReference type="ChEBI" id="CHEBI:15378"/>
        <dbReference type="ChEBI" id="CHEBI:15379"/>
        <dbReference type="ChEBI" id="CHEBI:57870"/>
        <dbReference type="ChEBI" id="CHEBI:58033"/>
        <dbReference type="ChEBI" id="CHEBI:58272"/>
    </reaction>
</comment>
<comment type="cofactor">
    <cofactor evidence="1">
        <name>Mg(2+)</name>
        <dbReference type="ChEBI" id="CHEBI:18420"/>
    </cofactor>
    <text evidence="1">Binds 1 Mg(2+) ion per subunit.</text>
</comment>
<comment type="subunit">
    <text evidence="1">Heterohexadecamer of 8 large chains and 8 small chains; disulfide-linked. The disulfide link is formed within the large subunit homodimers.</text>
</comment>
<comment type="subcellular location">
    <subcellularLocation>
        <location>Plastid</location>
        <location>Chloroplast</location>
    </subcellularLocation>
</comment>
<comment type="PTM">
    <text evidence="1">The disulfide bond which can form in the large chain dimeric partners within the hexadecamer appears to be associated with oxidative stress and protein turnover.</text>
</comment>
<comment type="miscellaneous">
    <text evidence="1">The basic functional RuBisCO is composed of a large chain homodimer in a 'head-to-tail' conformation. In form I RuBisCO this homodimer is arranged in a barrel-like tetramer with the small subunits forming a tetrameric 'cap' on each end of the 'barrel'.</text>
</comment>
<comment type="similarity">
    <text evidence="1">Belongs to the RuBisCO large chain family. Type I subfamily.</text>
</comment>
<gene>
    <name evidence="1" type="primary">rbcL</name>
</gene>
<proteinExistence type="inferred from homology"/>
<organism>
    <name type="scientific">Oenothera argillicola</name>
    <name type="common">Appalachian evening primrose</name>
    <dbReference type="NCBI Taxonomy" id="3940"/>
    <lineage>
        <taxon>Eukaryota</taxon>
        <taxon>Viridiplantae</taxon>
        <taxon>Streptophyta</taxon>
        <taxon>Embryophyta</taxon>
        <taxon>Tracheophyta</taxon>
        <taxon>Spermatophyta</taxon>
        <taxon>Magnoliopsida</taxon>
        <taxon>eudicotyledons</taxon>
        <taxon>Gunneridae</taxon>
        <taxon>Pentapetalae</taxon>
        <taxon>rosids</taxon>
        <taxon>malvids</taxon>
        <taxon>Myrtales</taxon>
        <taxon>Onagraceae</taxon>
        <taxon>Onagroideae</taxon>
        <taxon>Onagreae</taxon>
        <taxon>Oenothera</taxon>
    </lineage>
</organism>
<accession>B0Z4K9</accession>